<reference key="1">
    <citation type="submission" date="2009-03" db="EMBL/GenBank/DDBJ databases">
        <title>Complete genome sequence of Edwardsiella ictaluri 93-146.</title>
        <authorList>
            <person name="Williams M.L."/>
            <person name="Gillaspy A.F."/>
            <person name="Dyer D.W."/>
            <person name="Thune R.L."/>
            <person name="Waldbieser G.C."/>
            <person name="Schuster S.C."/>
            <person name="Gipson J."/>
            <person name="Zaitshik J."/>
            <person name="Landry C."/>
            <person name="Lawrence M.L."/>
        </authorList>
    </citation>
    <scope>NUCLEOTIDE SEQUENCE [LARGE SCALE GENOMIC DNA]</scope>
    <source>
        <strain>93-146</strain>
    </source>
</reference>
<name>PAND_EDWI9</name>
<feature type="chain" id="PRO_1000206174" description="Aspartate 1-decarboxylase beta chain" evidence="1">
    <location>
        <begin position="1"/>
        <end position="24"/>
    </location>
</feature>
<feature type="chain" id="PRO_1000206175" description="Aspartate 1-decarboxylase alpha chain" evidence="1">
    <location>
        <begin position="25"/>
        <end position="126"/>
    </location>
</feature>
<feature type="active site" description="Schiff-base intermediate with substrate; via pyruvic acid" evidence="1">
    <location>
        <position position="25"/>
    </location>
</feature>
<feature type="active site" description="Proton donor" evidence="1">
    <location>
        <position position="58"/>
    </location>
</feature>
<feature type="binding site" evidence="1">
    <location>
        <position position="57"/>
    </location>
    <ligand>
        <name>substrate</name>
    </ligand>
</feature>
<feature type="binding site" evidence="1">
    <location>
        <begin position="73"/>
        <end position="75"/>
    </location>
    <ligand>
        <name>substrate</name>
    </ligand>
</feature>
<feature type="modified residue" description="Pyruvic acid (Ser)" evidence="1">
    <location>
        <position position="25"/>
    </location>
</feature>
<evidence type="ECO:0000255" key="1">
    <source>
        <dbReference type="HAMAP-Rule" id="MF_00446"/>
    </source>
</evidence>
<protein>
    <recommendedName>
        <fullName evidence="1">Aspartate 1-decarboxylase</fullName>
        <ecNumber evidence="1">4.1.1.11</ecNumber>
    </recommendedName>
    <alternativeName>
        <fullName evidence="1">Aspartate alpha-decarboxylase</fullName>
    </alternativeName>
    <component>
        <recommendedName>
            <fullName evidence="1">Aspartate 1-decarboxylase beta chain</fullName>
        </recommendedName>
    </component>
    <component>
        <recommendedName>
            <fullName evidence="1">Aspartate 1-decarboxylase alpha chain</fullName>
        </recommendedName>
    </component>
</protein>
<gene>
    <name evidence="1" type="primary">panD</name>
    <name type="ordered locus">NT01EI_0784</name>
</gene>
<proteinExistence type="inferred from homology"/>
<keyword id="KW-0068">Autocatalytic cleavage</keyword>
<keyword id="KW-0963">Cytoplasm</keyword>
<keyword id="KW-0210">Decarboxylase</keyword>
<keyword id="KW-0456">Lyase</keyword>
<keyword id="KW-0566">Pantothenate biosynthesis</keyword>
<keyword id="KW-0670">Pyruvate</keyword>
<keyword id="KW-0704">Schiff base</keyword>
<keyword id="KW-0865">Zymogen</keyword>
<comment type="function">
    <text evidence="1">Catalyzes the pyruvoyl-dependent decarboxylation of aspartate to produce beta-alanine.</text>
</comment>
<comment type="catalytic activity">
    <reaction evidence="1">
        <text>L-aspartate + H(+) = beta-alanine + CO2</text>
        <dbReference type="Rhea" id="RHEA:19497"/>
        <dbReference type="ChEBI" id="CHEBI:15378"/>
        <dbReference type="ChEBI" id="CHEBI:16526"/>
        <dbReference type="ChEBI" id="CHEBI:29991"/>
        <dbReference type="ChEBI" id="CHEBI:57966"/>
        <dbReference type="EC" id="4.1.1.11"/>
    </reaction>
</comment>
<comment type="cofactor">
    <cofactor evidence="1">
        <name>pyruvate</name>
        <dbReference type="ChEBI" id="CHEBI:15361"/>
    </cofactor>
    <text evidence="1">Binds 1 pyruvoyl group covalently per subunit.</text>
</comment>
<comment type="pathway">
    <text evidence="1">Cofactor biosynthesis; (R)-pantothenate biosynthesis; beta-alanine from L-aspartate: step 1/1.</text>
</comment>
<comment type="subunit">
    <text evidence="1">Heterooctamer of four alpha and four beta subunits.</text>
</comment>
<comment type="subcellular location">
    <subcellularLocation>
        <location evidence="1">Cytoplasm</location>
    </subcellularLocation>
</comment>
<comment type="PTM">
    <text evidence="1">Is synthesized initially as an inactive proenzyme, which is activated by self-cleavage at a specific serine bond to produce a beta-subunit with a hydroxyl group at its C-terminus and an alpha-subunit with a pyruvoyl group at its N-terminus.</text>
</comment>
<comment type="similarity">
    <text evidence="1">Belongs to the PanD family.</text>
</comment>
<accession>C5B9K4</accession>
<dbReference type="EC" id="4.1.1.11" evidence="1"/>
<dbReference type="EMBL" id="CP001600">
    <property type="protein sequence ID" value="ACR68005.1"/>
    <property type="molecule type" value="Genomic_DNA"/>
</dbReference>
<dbReference type="RefSeq" id="WP_015870198.1">
    <property type="nucleotide sequence ID" value="NZ_CP169062.1"/>
</dbReference>
<dbReference type="SMR" id="C5B9K4"/>
<dbReference type="STRING" id="67780.B6E78_14540"/>
<dbReference type="GeneID" id="69537842"/>
<dbReference type="KEGG" id="eic:NT01EI_0784"/>
<dbReference type="PATRIC" id="fig|634503.3.peg.710"/>
<dbReference type="HOGENOM" id="CLU_115305_2_1_6"/>
<dbReference type="OrthoDB" id="9803983at2"/>
<dbReference type="UniPathway" id="UPA00028">
    <property type="reaction ID" value="UER00002"/>
</dbReference>
<dbReference type="Proteomes" id="UP000001485">
    <property type="component" value="Chromosome"/>
</dbReference>
<dbReference type="GO" id="GO:0005829">
    <property type="term" value="C:cytosol"/>
    <property type="evidence" value="ECO:0007669"/>
    <property type="project" value="TreeGrafter"/>
</dbReference>
<dbReference type="GO" id="GO:0004068">
    <property type="term" value="F:aspartate 1-decarboxylase activity"/>
    <property type="evidence" value="ECO:0007669"/>
    <property type="project" value="UniProtKB-UniRule"/>
</dbReference>
<dbReference type="GO" id="GO:0006523">
    <property type="term" value="P:alanine biosynthetic process"/>
    <property type="evidence" value="ECO:0007669"/>
    <property type="project" value="InterPro"/>
</dbReference>
<dbReference type="GO" id="GO:0015940">
    <property type="term" value="P:pantothenate biosynthetic process"/>
    <property type="evidence" value="ECO:0007669"/>
    <property type="project" value="UniProtKB-UniRule"/>
</dbReference>
<dbReference type="CDD" id="cd06919">
    <property type="entry name" value="Asp_decarbox"/>
    <property type="match status" value="1"/>
</dbReference>
<dbReference type="FunFam" id="2.40.40.20:FF:000004">
    <property type="entry name" value="Aspartate 1-decarboxylase"/>
    <property type="match status" value="1"/>
</dbReference>
<dbReference type="Gene3D" id="2.40.40.20">
    <property type="match status" value="1"/>
</dbReference>
<dbReference type="HAMAP" id="MF_00446">
    <property type="entry name" value="PanD"/>
    <property type="match status" value="1"/>
</dbReference>
<dbReference type="InterPro" id="IPR009010">
    <property type="entry name" value="Asp_de-COase-like_dom_sf"/>
</dbReference>
<dbReference type="InterPro" id="IPR003190">
    <property type="entry name" value="Asp_decarbox"/>
</dbReference>
<dbReference type="NCBIfam" id="TIGR00223">
    <property type="entry name" value="panD"/>
    <property type="match status" value="1"/>
</dbReference>
<dbReference type="PANTHER" id="PTHR21012">
    <property type="entry name" value="ASPARTATE 1-DECARBOXYLASE"/>
    <property type="match status" value="1"/>
</dbReference>
<dbReference type="PANTHER" id="PTHR21012:SF0">
    <property type="entry name" value="ASPARTATE 1-DECARBOXYLASE"/>
    <property type="match status" value="1"/>
</dbReference>
<dbReference type="Pfam" id="PF02261">
    <property type="entry name" value="Asp_decarbox"/>
    <property type="match status" value="1"/>
</dbReference>
<dbReference type="PIRSF" id="PIRSF006246">
    <property type="entry name" value="Asp_decarbox"/>
    <property type="match status" value="1"/>
</dbReference>
<dbReference type="SUPFAM" id="SSF50692">
    <property type="entry name" value="ADC-like"/>
    <property type="match status" value="1"/>
</dbReference>
<organism>
    <name type="scientific">Edwardsiella ictaluri (strain 93-146)</name>
    <dbReference type="NCBI Taxonomy" id="634503"/>
    <lineage>
        <taxon>Bacteria</taxon>
        <taxon>Pseudomonadati</taxon>
        <taxon>Pseudomonadota</taxon>
        <taxon>Gammaproteobacteria</taxon>
        <taxon>Enterobacterales</taxon>
        <taxon>Hafniaceae</taxon>
        <taxon>Edwardsiella</taxon>
    </lineage>
</organism>
<sequence length="126" mass="13819">MVRTMLQGKLHRVKVTQSDLNYEGSCAIDQDFLNAAGILQYEAIDIYNVDNGQRFSTYAIAAEPGSKIISVNGAAARCACVGDTLIICSYVQIPDEQARTHHPRVVYFEGANQMKRLAKSVPVQVA</sequence>